<dbReference type="EC" id="6.3.2.6" evidence="1"/>
<dbReference type="EMBL" id="CP000487">
    <property type="protein sequence ID" value="ABK83361.1"/>
    <property type="molecule type" value="Genomic_DNA"/>
</dbReference>
<dbReference type="RefSeq" id="WP_002849483.1">
    <property type="nucleotide sequence ID" value="NC_008599.1"/>
</dbReference>
<dbReference type="SMR" id="A0RPI2"/>
<dbReference type="GeneID" id="61064777"/>
<dbReference type="KEGG" id="cff:CFF8240_0945"/>
<dbReference type="eggNOG" id="COG0152">
    <property type="taxonomic scope" value="Bacteria"/>
</dbReference>
<dbReference type="HOGENOM" id="CLU_061495_2_0_7"/>
<dbReference type="UniPathway" id="UPA00074">
    <property type="reaction ID" value="UER00131"/>
</dbReference>
<dbReference type="Proteomes" id="UP000000760">
    <property type="component" value="Chromosome"/>
</dbReference>
<dbReference type="GO" id="GO:0005524">
    <property type="term" value="F:ATP binding"/>
    <property type="evidence" value="ECO:0007669"/>
    <property type="project" value="UniProtKB-KW"/>
</dbReference>
<dbReference type="GO" id="GO:0004639">
    <property type="term" value="F:phosphoribosylaminoimidazolesuccinocarboxamide synthase activity"/>
    <property type="evidence" value="ECO:0007669"/>
    <property type="project" value="UniProtKB-UniRule"/>
</dbReference>
<dbReference type="GO" id="GO:0006189">
    <property type="term" value="P:'de novo' IMP biosynthetic process"/>
    <property type="evidence" value="ECO:0007669"/>
    <property type="project" value="UniProtKB-UniRule"/>
</dbReference>
<dbReference type="GO" id="GO:0009236">
    <property type="term" value="P:cobalamin biosynthetic process"/>
    <property type="evidence" value="ECO:0007669"/>
    <property type="project" value="InterPro"/>
</dbReference>
<dbReference type="CDD" id="cd01415">
    <property type="entry name" value="SAICAR_synt_PurC"/>
    <property type="match status" value="1"/>
</dbReference>
<dbReference type="FunFam" id="3.30.470.20:FF:000006">
    <property type="entry name" value="Phosphoribosylaminoimidazole-succinocarboxamide synthase"/>
    <property type="match status" value="1"/>
</dbReference>
<dbReference type="Gene3D" id="3.30.470.20">
    <property type="entry name" value="ATP-grasp fold, B domain"/>
    <property type="match status" value="1"/>
</dbReference>
<dbReference type="Gene3D" id="3.30.200.20">
    <property type="entry name" value="Phosphorylase Kinase, domain 1"/>
    <property type="match status" value="1"/>
</dbReference>
<dbReference type="HAMAP" id="MF_00137">
    <property type="entry name" value="SAICAR_synth"/>
    <property type="match status" value="1"/>
</dbReference>
<dbReference type="InterPro" id="IPR028923">
    <property type="entry name" value="SAICAR_synt/ADE2_N"/>
</dbReference>
<dbReference type="InterPro" id="IPR033934">
    <property type="entry name" value="SAICAR_synt_PurC"/>
</dbReference>
<dbReference type="InterPro" id="IPR001636">
    <property type="entry name" value="SAICAR_synth"/>
</dbReference>
<dbReference type="InterPro" id="IPR050089">
    <property type="entry name" value="SAICAR_synthetase"/>
</dbReference>
<dbReference type="InterPro" id="IPR018236">
    <property type="entry name" value="SAICAR_synthetase_CS"/>
</dbReference>
<dbReference type="NCBIfam" id="TIGR00081">
    <property type="entry name" value="purC"/>
    <property type="match status" value="1"/>
</dbReference>
<dbReference type="PANTHER" id="PTHR43599">
    <property type="entry name" value="MULTIFUNCTIONAL PROTEIN ADE2"/>
    <property type="match status" value="1"/>
</dbReference>
<dbReference type="PANTHER" id="PTHR43599:SF3">
    <property type="entry name" value="SI:DKEY-6E2.2"/>
    <property type="match status" value="1"/>
</dbReference>
<dbReference type="Pfam" id="PF01259">
    <property type="entry name" value="SAICAR_synt"/>
    <property type="match status" value="1"/>
</dbReference>
<dbReference type="SUPFAM" id="SSF56104">
    <property type="entry name" value="SAICAR synthase-like"/>
    <property type="match status" value="1"/>
</dbReference>
<dbReference type="PROSITE" id="PS01057">
    <property type="entry name" value="SAICAR_SYNTHETASE_1"/>
    <property type="match status" value="1"/>
</dbReference>
<dbReference type="PROSITE" id="PS01058">
    <property type="entry name" value="SAICAR_SYNTHETASE_2"/>
    <property type="match status" value="1"/>
</dbReference>
<sequence length="237" mass="26816">MEKLEMIYEGKGKKMWSVKGHDDLLIAEFKDDLTAFNAEKKGSESGKGALNNKISTALFKLLKSKGIETALVDTINDTEQVVKKCKIIPLEVVVRNIATGSLSKRLAIKEGTVLPFTLVEFYYKDDALGDPLVNDEHCIIMDLVKSENDLDRLKHLGREINSILLPFFKEKGLKLVDFKIEFGVDKDGNILLADEISPDSCRFWDSVTNEKMDKDRFRQDLGSVKVAYEEVLRRILS</sequence>
<comment type="catalytic activity">
    <reaction evidence="1">
        <text>5-amino-1-(5-phospho-D-ribosyl)imidazole-4-carboxylate + L-aspartate + ATP = (2S)-2-[5-amino-1-(5-phospho-beta-D-ribosyl)imidazole-4-carboxamido]succinate + ADP + phosphate + 2 H(+)</text>
        <dbReference type="Rhea" id="RHEA:22628"/>
        <dbReference type="ChEBI" id="CHEBI:15378"/>
        <dbReference type="ChEBI" id="CHEBI:29991"/>
        <dbReference type="ChEBI" id="CHEBI:30616"/>
        <dbReference type="ChEBI" id="CHEBI:43474"/>
        <dbReference type="ChEBI" id="CHEBI:58443"/>
        <dbReference type="ChEBI" id="CHEBI:77657"/>
        <dbReference type="ChEBI" id="CHEBI:456216"/>
        <dbReference type="EC" id="6.3.2.6"/>
    </reaction>
</comment>
<comment type="pathway">
    <text evidence="1">Purine metabolism; IMP biosynthesis via de novo pathway; 5-amino-1-(5-phospho-D-ribosyl)imidazole-4-carboxamide from 5-amino-1-(5-phospho-D-ribosyl)imidazole-4-carboxylate: step 1/2.</text>
</comment>
<comment type="similarity">
    <text evidence="1">Belongs to the SAICAR synthetase family.</text>
</comment>
<organism>
    <name type="scientific">Campylobacter fetus subsp. fetus (strain 82-40)</name>
    <dbReference type="NCBI Taxonomy" id="360106"/>
    <lineage>
        <taxon>Bacteria</taxon>
        <taxon>Pseudomonadati</taxon>
        <taxon>Campylobacterota</taxon>
        <taxon>Epsilonproteobacteria</taxon>
        <taxon>Campylobacterales</taxon>
        <taxon>Campylobacteraceae</taxon>
        <taxon>Campylobacter</taxon>
    </lineage>
</organism>
<proteinExistence type="inferred from homology"/>
<gene>
    <name evidence="1" type="primary">purC</name>
    <name type="ordered locus">CFF8240_0945</name>
</gene>
<keyword id="KW-0067">ATP-binding</keyword>
<keyword id="KW-0436">Ligase</keyword>
<keyword id="KW-0547">Nucleotide-binding</keyword>
<keyword id="KW-0658">Purine biosynthesis</keyword>
<reference key="1">
    <citation type="submission" date="2006-11" db="EMBL/GenBank/DDBJ databases">
        <title>Sequence of Campylobacter fetus subsp. fetus 82-40.</title>
        <authorList>
            <person name="Fouts D.E."/>
            <person name="Nelson K.E."/>
        </authorList>
    </citation>
    <scope>NUCLEOTIDE SEQUENCE [LARGE SCALE GENOMIC DNA]</scope>
    <source>
        <strain>82-40</strain>
    </source>
</reference>
<protein>
    <recommendedName>
        <fullName evidence="1">Phosphoribosylaminoimidazole-succinocarboxamide synthase</fullName>
        <ecNumber evidence="1">6.3.2.6</ecNumber>
    </recommendedName>
    <alternativeName>
        <fullName evidence="1">SAICAR synthetase</fullName>
    </alternativeName>
</protein>
<feature type="chain" id="PRO_1000018680" description="Phosphoribosylaminoimidazole-succinocarboxamide synthase">
    <location>
        <begin position="1"/>
        <end position="237"/>
    </location>
</feature>
<accession>A0RPI2</accession>
<evidence type="ECO:0000255" key="1">
    <source>
        <dbReference type="HAMAP-Rule" id="MF_00137"/>
    </source>
</evidence>
<name>PUR7_CAMFF</name>